<feature type="transit peptide" description="Chloroplast" evidence="2">
    <location>
        <begin position="1"/>
        <end position="49"/>
    </location>
</feature>
<feature type="chain" id="PRO_0000185850" description="Glutathione S-transferase F8, chloroplastic">
    <location>
        <begin position="50"/>
        <end position="263"/>
    </location>
</feature>
<feature type="domain" description="GST N-terminal">
    <location>
        <begin position="50"/>
        <end position="131"/>
    </location>
</feature>
<feature type="domain" description="GST C-terminal">
    <location>
        <begin position="139"/>
        <end position="263"/>
    </location>
</feature>
<feature type="binding site" evidence="1">
    <location>
        <begin position="60"/>
        <end position="61"/>
    </location>
    <ligand>
        <name>glutathione</name>
        <dbReference type="ChEBI" id="CHEBI:57925"/>
    </ligand>
</feature>
<feature type="binding site" evidence="1">
    <location>
        <begin position="89"/>
        <end position="90"/>
    </location>
    <ligand>
        <name>glutathione</name>
        <dbReference type="ChEBI" id="CHEBI:57925"/>
    </ligand>
</feature>
<feature type="binding site" evidence="1">
    <location>
        <begin position="102"/>
        <end position="103"/>
    </location>
    <ligand>
        <name>glutathione</name>
        <dbReference type="ChEBI" id="CHEBI:57925"/>
    </ligand>
</feature>
<feature type="binding site" evidence="1">
    <location>
        <begin position="115"/>
        <end position="116"/>
    </location>
    <ligand>
        <name>glutathione</name>
        <dbReference type="ChEBI" id="CHEBI:57925"/>
    </ligand>
</feature>
<feature type="modified residue" description="Phosphothreonine" evidence="8">
    <location>
        <position position="177"/>
    </location>
</feature>
<feature type="splice variant" id="VSP_041935" description="In isoform 2." evidence="7">
    <location>
        <begin position="1"/>
        <end position="48"/>
    </location>
</feature>
<dbReference type="EC" id="2.5.1.18"/>
<dbReference type="EMBL" id="X95295">
    <property type="protein sequence ID" value="CAA64613.1"/>
    <property type="status" value="ALT_SEQ"/>
    <property type="molecule type" value="Genomic_DNA"/>
</dbReference>
<dbReference type="EMBL" id="AF288176">
    <property type="protein sequence ID" value="AAG30125.2"/>
    <property type="molecule type" value="mRNA"/>
</dbReference>
<dbReference type="EMBL" id="AC005309">
    <property type="protein sequence ID" value="AAC63629.2"/>
    <property type="molecule type" value="Genomic_DNA"/>
</dbReference>
<dbReference type="EMBL" id="CP002685">
    <property type="protein sequence ID" value="AEC10880.1"/>
    <property type="molecule type" value="Genomic_DNA"/>
</dbReference>
<dbReference type="EMBL" id="CP002685">
    <property type="protein sequence ID" value="ANM61251.1"/>
    <property type="molecule type" value="Genomic_DNA"/>
</dbReference>
<dbReference type="EMBL" id="DQ069797">
    <property type="protein sequence ID" value="AAY82256.1"/>
    <property type="molecule type" value="mRNA"/>
</dbReference>
<dbReference type="PIR" id="H84918">
    <property type="entry name" value="H84918"/>
</dbReference>
<dbReference type="RefSeq" id="NP_001323480.1">
    <molecule id="Q96266-1"/>
    <property type="nucleotide sequence ID" value="NM_001337273.1"/>
</dbReference>
<dbReference type="RefSeq" id="NP_850479.1">
    <molecule id="Q96266-1"/>
    <property type="nucleotide sequence ID" value="NM_180148.5"/>
</dbReference>
<dbReference type="SMR" id="Q96266"/>
<dbReference type="BioGRID" id="4721">
    <property type="interactions" value="2"/>
</dbReference>
<dbReference type="FunCoup" id="Q96266">
    <property type="interactions" value="1675"/>
</dbReference>
<dbReference type="IntAct" id="Q96266">
    <property type="interactions" value="2"/>
</dbReference>
<dbReference type="STRING" id="3702.Q96266"/>
<dbReference type="iPTMnet" id="Q96266"/>
<dbReference type="MetOSite" id="Q96266"/>
<dbReference type="PaxDb" id="3702-AT2G47730.1"/>
<dbReference type="ProteomicsDB" id="247186">
    <molecule id="Q96266-1"/>
</dbReference>
<dbReference type="EnsemblPlants" id="AT2G47730.1">
    <molecule id="Q96266-1"/>
    <property type="protein sequence ID" value="AT2G47730.1"/>
    <property type="gene ID" value="AT2G47730"/>
</dbReference>
<dbReference type="EnsemblPlants" id="AT2G47730.2">
    <molecule id="Q96266-1"/>
    <property type="protein sequence ID" value="AT2G47730.2"/>
    <property type="gene ID" value="AT2G47730"/>
</dbReference>
<dbReference type="GeneID" id="819386"/>
<dbReference type="Gramene" id="AT2G47730.1">
    <molecule id="Q96266-1"/>
    <property type="protein sequence ID" value="AT2G47730.1"/>
    <property type="gene ID" value="AT2G47730"/>
</dbReference>
<dbReference type="Gramene" id="AT2G47730.2">
    <molecule id="Q96266-1"/>
    <property type="protein sequence ID" value="AT2G47730.2"/>
    <property type="gene ID" value="AT2G47730"/>
</dbReference>
<dbReference type="KEGG" id="ath:AT2G47730"/>
<dbReference type="Araport" id="AT2G47730"/>
<dbReference type="TAIR" id="AT2G47730">
    <property type="gene designation" value="GSTF8"/>
</dbReference>
<dbReference type="eggNOG" id="KOG0867">
    <property type="taxonomic scope" value="Eukaryota"/>
</dbReference>
<dbReference type="HOGENOM" id="CLU_011226_5_1_1"/>
<dbReference type="InParanoid" id="Q96266"/>
<dbReference type="OMA" id="PAIHYLM"/>
<dbReference type="PhylomeDB" id="Q96266"/>
<dbReference type="BioCyc" id="ARA:AT2G47730-MONOMER"/>
<dbReference type="BioCyc" id="MetaCyc:AT2G47730-MONOMER"/>
<dbReference type="CD-CODE" id="4299E36E">
    <property type="entry name" value="Nucleolus"/>
</dbReference>
<dbReference type="PRO" id="PR:Q96266"/>
<dbReference type="Proteomes" id="UP000006548">
    <property type="component" value="Chromosome 2"/>
</dbReference>
<dbReference type="ExpressionAtlas" id="Q96266">
    <property type="expression patterns" value="baseline and differential"/>
</dbReference>
<dbReference type="GO" id="GO:0009507">
    <property type="term" value="C:chloroplast"/>
    <property type="evidence" value="ECO:0007005"/>
    <property type="project" value="TAIR"/>
</dbReference>
<dbReference type="GO" id="GO:0009941">
    <property type="term" value="C:chloroplast envelope"/>
    <property type="evidence" value="ECO:0007005"/>
    <property type="project" value="TAIR"/>
</dbReference>
<dbReference type="GO" id="GO:0009570">
    <property type="term" value="C:chloroplast stroma"/>
    <property type="evidence" value="ECO:0007005"/>
    <property type="project" value="TAIR"/>
</dbReference>
<dbReference type="GO" id="GO:0005829">
    <property type="term" value="C:cytosol"/>
    <property type="evidence" value="ECO:0007005"/>
    <property type="project" value="TAIR"/>
</dbReference>
<dbReference type="GO" id="GO:0005634">
    <property type="term" value="C:nucleus"/>
    <property type="evidence" value="ECO:0007005"/>
    <property type="project" value="TAIR"/>
</dbReference>
<dbReference type="GO" id="GO:0000325">
    <property type="term" value="C:plant-type vacuole"/>
    <property type="evidence" value="ECO:0007005"/>
    <property type="project" value="TAIR"/>
</dbReference>
<dbReference type="GO" id="GO:0010319">
    <property type="term" value="C:stromule"/>
    <property type="evidence" value="ECO:0000314"/>
    <property type="project" value="TAIR"/>
</dbReference>
<dbReference type="GO" id="GO:0009579">
    <property type="term" value="C:thylakoid"/>
    <property type="evidence" value="ECO:0007005"/>
    <property type="project" value="TAIR"/>
</dbReference>
<dbReference type="GO" id="GO:0043295">
    <property type="term" value="F:glutathione binding"/>
    <property type="evidence" value="ECO:0000314"/>
    <property type="project" value="TAIR"/>
</dbReference>
<dbReference type="GO" id="GO:0004364">
    <property type="term" value="F:glutathione transferase activity"/>
    <property type="evidence" value="ECO:0000314"/>
    <property type="project" value="TAIR"/>
</dbReference>
<dbReference type="GO" id="GO:0004601">
    <property type="term" value="F:peroxidase activity"/>
    <property type="evidence" value="ECO:0007669"/>
    <property type="project" value="UniProtKB-KW"/>
</dbReference>
<dbReference type="GO" id="GO:1901149">
    <property type="term" value="F:salicylic acid binding"/>
    <property type="evidence" value="ECO:0007005"/>
    <property type="project" value="TAIR"/>
</dbReference>
<dbReference type="GO" id="GO:0071456">
    <property type="term" value="P:cellular response to hypoxia"/>
    <property type="evidence" value="ECO:0007007"/>
    <property type="project" value="TAIR"/>
</dbReference>
<dbReference type="GO" id="GO:0006952">
    <property type="term" value="P:defense response"/>
    <property type="evidence" value="ECO:0000270"/>
    <property type="project" value="TAIR"/>
</dbReference>
<dbReference type="GO" id="GO:0009409">
    <property type="term" value="P:response to cold"/>
    <property type="evidence" value="ECO:0000270"/>
    <property type="project" value="TAIR"/>
</dbReference>
<dbReference type="GO" id="GO:0009407">
    <property type="term" value="P:toxin catabolic process"/>
    <property type="evidence" value="ECO:0000304"/>
    <property type="project" value="TAIR"/>
</dbReference>
<dbReference type="CDD" id="cd03187">
    <property type="entry name" value="GST_C_Phi"/>
    <property type="match status" value="1"/>
</dbReference>
<dbReference type="CDD" id="cd03053">
    <property type="entry name" value="GST_N_Phi"/>
    <property type="match status" value="1"/>
</dbReference>
<dbReference type="FunFam" id="1.20.1050.10:FF:000004">
    <property type="entry name" value="Glutathione S-transferase F2"/>
    <property type="match status" value="1"/>
</dbReference>
<dbReference type="FunFam" id="3.40.30.10:FF:000016">
    <property type="entry name" value="Glutathione S-transferase F2"/>
    <property type="match status" value="1"/>
</dbReference>
<dbReference type="Gene3D" id="1.20.1050.10">
    <property type="match status" value="1"/>
</dbReference>
<dbReference type="Gene3D" id="3.40.30.10">
    <property type="entry name" value="Glutaredoxin"/>
    <property type="match status" value="1"/>
</dbReference>
<dbReference type="InterPro" id="IPR010987">
    <property type="entry name" value="Glutathione-S-Trfase_C-like"/>
</dbReference>
<dbReference type="InterPro" id="IPR036282">
    <property type="entry name" value="Glutathione-S-Trfase_C_sf"/>
</dbReference>
<dbReference type="InterPro" id="IPR004045">
    <property type="entry name" value="Glutathione_S-Trfase_N"/>
</dbReference>
<dbReference type="InterPro" id="IPR004046">
    <property type="entry name" value="GST_C"/>
</dbReference>
<dbReference type="InterPro" id="IPR034347">
    <property type="entry name" value="GST_Phi_C"/>
</dbReference>
<dbReference type="InterPro" id="IPR036249">
    <property type="entry name" value="Thioredoxin-like_sf"/>
</dbReference>
<dbReference type="PANTHER" id="PTHR43900:SF44">
    <property type="entry name" value="GLUTATHIONE S-TRANSFERASE F8, CHLOROPLASTIC"/>
    <property type="match status" value="1"/>
</dbReference>
<dbReference type="PANTHER" id="PTHR43900">
    <property type="entry name" value="GLUTATHIONE S-TRANSFERASE RHO"/>
    <property type="match status" value="1"/>
</dbReference>
<dbReference type="Pfam" id="PF00043">
    <property type="entry name" value="GST_C"/>
    <property type="match status" value="1"/>
</dbReference>
<dbReference type="Pfam" id="PF02798">
    <property type="entry name" value="GST_N"/>
    <property type="match status" value="1"/>
</dbReference>
<dbReference type="SFLD" id="SFLDG01154">
    <property type="entry name" value="Main.5:_Phi-like"/>
    <property type="match status" value="1"/>
</dbReference>
<dbReference type="SFLD" id="SFLDG00358">
    <property type="entry name" value="Main_(cytGST)"/>
    <property type="match status" value="1"/>
</dbReference>
<dbReference type="SUPFAM" id="SSF47616">
    <property type="entry name" value="GST C-terminal domain-like"/>
    <property type="match status" value="1"/>
</dbReference>
<dbReference type="SUPFAM" id="SSF52833">
    <property type="entry name" value="Thioredoxin-like"/>
    <property type="match status" value="1"/>
</dbReference>
<dbReference type="PROSITE" id="PS50405">
    <property type="entry name" value="GST_CTER"/>
    <property type="match status" value="1"/>
</dbReference>
<dbReference type="PROSITE" id="PS50404">
    <property type="entry name" value="GST_NTER"/>
    <property type="match status" value="1"/>
</dbReference>
<comment type="function">
    <text evidence="3">In vitro, possesses glutathione S-transferase activity toward 1-chloro-2,4-dinitrobenzene (CDNB) and glutathione peroxidase activity toward cumene hydroperoxide and linoleic acid-13-hydroperoxide. May be involved in the conjugation of reduced glutathione to a wide number of exogenous and endogenous hydrophobic electrophiles and have a detoxification role against certain herbicides.</text>
</comment>
<comment type="catalytic activity">
    <reaction>
        <text>RX + glutathione = an S-substituted glutathione + a halide anion + H(+)</text>
        <dbReference type="Rhea" id="RHEA:16437"/>
        <dbReference type="ChEBI" id="CHEBI:15378"/>
        <dbReference type="ChEBI" id="CHEBI:16042"/>
        <dbReference type="ChEBI" id="CHEBI:17792"/>
        <dbReference type="ChEBI" id="CHEBI:57925"/>
        <dbReference type="ChEBI" id="CHEBI:90779"/>
        <dbReference type="EC" id="2.5.1.18"/>
    </reaction>
</comment>
<comment type="subcellular location">
    <subcellularLocation>
        <location evidence="5">Plastid</location>
        <location evidence="5">Chloroplast</location>
    </subcellularLocation>
    <subcellularLocation>
        <location evidence="5">Cytoplasm</location>
        <location evidence="5">Cytosol</location>
    </subcellularLocation>
</comment>
<comment type="alternative products">
    <event type="alternative splicing"/>
    <isoform>
        <id>Q96266-1</id>
        <name>1</name>
        <name>GSTF8-L</name>
        <sequence type="displayed"/>
    </isoform>
    <isoform>
        <id>Q96266-2</id>
        <name>2</name>
        <name>GSTF8-S</name>
        <sequence type="described" ref="VSP_041935"/>
    </isoform>
</comment>
<comment type="tissue specificity">
    <text evidence="5">Isoform 1 is predominantly expressed in leaves and isoform 2 in roots.</text>
</comment>
<comment type="induction">
    <text evidence="3 4 6">By salicylic acid, ethylene, methyl jasmonate, auxin, H(2)O(2), metolachlor, and the pathogen Hyaloperonospora parasitica.</text>
</comment>
<comment type="similarity">
    <text evidence="7">Belongs to the GST superfamily. Phi family.</text>
</comment>
<comment type="sequence caution" evidence="7">
    <conflict type="erroneous gene model prediction">
        <sequence resource="EMBL-CDS" id="CAA64613"/>
    </conflict>
</comment>
<organism>
    <name type="scientific">Arabidopsis thaliana</name>
    <name type="common">Mouse-ear cress</name>
    <dbReference type="NCBI Taxonomy" id="3702"/>
    <lineage>
        <taxon>Eukaryota</taxon>
        <taxon>Viridiplantae</taxon>
        <taxon>Streptophyta</taxon>
        <taxon>Embryophyta</taxon>
        <taxon>Tracheophyta</taxon>
        <taxon>Spermatophyta</taxon>
        <taxon>Magnoliopsida</taxon>
        <taxon>eudicotyledons</taxon>
        <taxon>Gunneridae</taxon>
        <taxon>Pentapetalae</taxon>
        <taxon>rosids</taxon>
        <taxon>malvids</taxon>
        <taxon>Brassicales</taxon>
        <taxon>Brassicaceae</taxon>
        <taxon>Camelineae</taxon>
        <taxon>Arabidopsis</taxon>
    </lineage>
</organism>
<reference key="1">
    <citation type="journal article" date="1996" name="Plant J.">
        <title>The promoter of a H2O2-inducible, Arabidopsis glutathione S-transferase gene contains closely linked OBF- and OBP1-binding sites.</title>
        <authorList>
            <person name="Chen W."/>
            <person name="Chao G."/>
            <person name="Singh K.B."/>
        </authorList>
    </citation>
    <scope>NUCLEOTIDE SEQUENCE [GENOMIC DNA]</scope>
    <scope>INDUCTION</scope>
    <source>
        <strain>cv. Columbia</strain>
    </source>
</reference>
<reference key="2">
    <citation type="journal article" date="2002" name="Plant Mol. Biol.">
        <title>Probing the diversity of the Arabidopsis glutathione S-transferase gene family.</title>
        <authorList>
            <person name="Wagner U."/>
            <person name="Edwards R."/>
            <person name="Dixon D.P."/>
            <person name="Mauch F."/>
        </authorList>
    </citation>
    <scope>NUCLEOTIDE SEQUENCE [MRNA] (ISOFORM 1)</scope>
    <scope>FUNCTION</scope>
    <scope>INDUCTION</scope>
    <scope>GENE FAMILY</scope>
    <scope>NOMENCLATURE</scope>
    <source>
        <strain>cv. Columbia</strain>
    </source>
</reference>
<reference key="3">
    <citation type="journal article" date="1999" name="Nature">
        <title>Sequence and analysis of chromosome 2 of the plant Arabidopsis thaliana.</title>
        <authorList>
            <person name="Lin X."/>
            <person name="Kaul S."/>
            <person name="Rounsley S.D."/>
            <person name="Shea T.P."/>
            <person name="Benito M.-I."/>
            <person name="Town C.D."/>
            <person name="Fujii C.Y."/>
            <person name="Mason T.M."/>
            <person name="Bowman C.L."/>
            <person name="Barnstead M.E."/>
            <person name="Feldblyum T.V."/>
            <person name="Buell C.R."/>
            <person name="Ketchum K.A."/>
            <person name="Lee J.J."/>
            <person name="Ronning C.M."/>
            <person name="Koo H.L."/>
            <person name="Moffat K.S."/>
            <person name="Cronin L.A."/>
            <person name="Shen M."/>
            <person name="Pai G."/>
            <person name="Van Aken S."/>
            <person name="Umayam L."/>
            <person name="Tallon L.J."/>
            <person name="Gill J.E."/>
            <person name="Adams M.D."/>
            <person name="Carrera A.J."/>
            <person name="Creasy T.H."/>
            <person name="Goodman H.M."/>
            <person name="Somerville C.R."/>
            <person name="Copenhaver G.P."/>
            <person name="Preuss D."/>
            <person name="Nierman W.C."/>
            <person name="White O."/>
            <person name="Eisen J.A."/>
            <person name="Salzberg S.L."/>
            <person name="Fraser C.M."/>
            <person name="Venter J.C."/>
        </authorList>
    </citation>
    <scope>NUCLEOTIDE SEQUENCE [LARGE SCALE GENOMIC DNA]</scope>
    <source>
        <strain>cv. Columbia</strain>
    </source>
</reference>
<reference key="4">
    <citation type="journal article" date="2017" name="Plant J.">
        <title>Araport11: a complete reannotation of the Arabidopsis thaliana reference genome.</title>
        <authorList>
            <person name="Cheng C.Y."/>
            <person name="Krishnakumar V."/>
            <person name="Chan A.P."/>
            <person name="Thibaud-Nissen F."/>
            <person name="Schobel S."/>
            <person name="Town C.D."/>
        </authorList>
    </citation>
    <scope>GENOME REANNOTATION</scope>
    <source>
        <strain>cv. Columbia</strain>
    </source>
</reference>
<reference key="5">
    <citation type="journal article" date="2005" name="Plant Physiol.">
        <title>Analysis of the cDNAs of hypothetical genes on Arabidopsis chromosome 2 reveals numerous transcript variants.</title>
        <authorList>
            <person name="Xiao Y.-L."/>
            <person name="Smith S.R."/>
            <person name="Ishmael N."/>
            <person name="Redman J.C."/>
            <person name="Kumar N."/>
            <person name="Monaghan E.L."/>
            <person name="Ayele M."/>
            <person name="Haas B.J."/>
            <person name="Wu H.C."/>
            <person name="Town C.D."/>
        </authorList>
    </citation>
    <scope>NUCLEOTIDE SEQUENCE [LARGE SCALE MRNA] (ISOFORM 1)</scope>
    <source>
        <strain>cv. Columbia</strain>
    </source>
</reference>
<reference key="6">
    <citation type="journal article" date="2006" name="Plant Physiol.">
        <title>Desensitization of GSTF8 induction by a prior chemical treatment is long lasting and operates in a tissue-dependent manner.</title>
        <authorList>
            <person name="Foley R.C."/>
            <person name="Sappl P.G."/>
            <person name="Perl-Treves R."/>
            <person name="Millar A.H."/>
            <person name="Singh K.B."/>
        </authorList>
    </citation>
    <scope>INDUCTION</scope>
</reference>
<reference key="7">
    <citation type="journal article" date="2007" name="J. Biol. Chem.">
        <title>Differential gene expression and subcellular targeting of Arabidopsis glutathione S-transferase F8 is achieved through alternative transcription start sites.</title>
        <authorList>
            <person name="Thatcher L.F."/>
            <person name="Carrie C."/>
            <person name="Andersson C.R."/>
            <person name="Sivasithamparam K."/>
            <person name="Whelan J."/>
            <person name="Singh K.B."/>
        </authorList>
    </citation>
    <scope>ALTERNATIVE SPLICING</scope>
    <scope>SUBCELLULAR LOCATION</scope>
    <scope>TISSUE SPECIFICITY</scope>
</reference>
<reference key="8">
    <citation type="journal article" date="2012" name="J. Proteome Res.">
        <title>Identification of phosphoproteins in Arabidopsis thaliana leaves using polyethylene glycol fractionation, immobilized metal-ion affinity chromatography, two-dimensional gel electrophoresis and mass spectrometry.</title>
        <authorList>
            <person name="Aryal U.K."/>
            <person name="Krochko J.E."/>
            <person name="Ross A.R."/>
        </authorList>
    </citation>
    <scope>PHOSPHORYLATION [LARGE SCALE ANALYSIS] AT THR-177</scope>
    <scope>IDENTIFICATION BY MASS SPECTROMETRY [LARGE SCALE ANALYSIS]</scope>
</reference>
<gene>
    <name type="primary">GSTF8</name>
    <name type="synonym">GST6</name>
    <name type="synonym">GSTF5</name>
    <name type="ordered locus">At2g47730</name>
    <name type="ORF">F17A22.12</name>
</gene>
<proteinExistence type="evidence at protein level"/>
<protein>
    <recommendedName>
        <fullName>Glutathione S-transferase F8, chloroplastic</fullName>
        <shortName>AtGSTF8</shortName>
        <ecNumber>2.5.1.18</ecNumber>
    </recommendedName>
    <alternativeName>
        <fullName>AtGSTF5</fullName>
    </alternativeName>
    <alternativeName>
        <fullName>GST class-phi member 8</fullName>
    </alternativeName>
    <alternativeName>
        <fullName>Glutathione S-transferase 6</fullName>
    </alternativeName>
</protein>
<sequence length="263" mass="29232">MGAIQARLPLFLSPPSIKHHTFLHSSSSNSNFKIRSNKSSSSSSSSIIMASIKVHGVPMSTATMRVLATLYEKDLQFELIPVDMRAGAHKQEAHLALNPFGQIPALEDGDLTLFESRAITQYLAEEYSEKGEKLISQDCKKVKATTNVWLQVEGQQFDPNASKLAFERVFKGMFGMTTDPAAVQELEGKLQKVLDVYEARLAKSEFLAGDSFTLADLHHLPAIHYLLGTDSKVLFDSRPKVSEWIKKISARPAWAKVIDLQKQ</sequence>
<keyword id="KW-0025">Alternative splicing</keyword>
<keyword id="KW-0150">Chloroplast</keyword>
<keyword id="KW-0963">Cytoplasm</keyword>
<keyword id="KW-0216">Detoxification</keyword>
<keyword id="KW-0560">Oxidoreductase</keyword>
<keyword id="KW-0575">Peroxidase</keyword>
<keyword id="KW-0597">Phosphoprotein</keyword>
<keyword id="KW-0934">Plastid</keyword>
<keyword id="KW-1185">Reference proteome</keyword>
<keyword id="KW-0346">Stress response</keyword>
<keyword id="KW-0808">Transferase</keyword>
<keyword id="KW-0809">Transit peptide</keyword>
<accession>Q96266</accession>
<accession>O82242</accession>
<accession>Q4PL91</accession>
<accession>Q9FUT2</accession>
<name>GSTF8_ARATH</name>
<evidence type="ECO:0000250" key="1"/>
<evidence type="ECO:0000255" key="2"/>
<evidence type="ECO:0000269" key="3">
    <source>
    </source>
</evidence>
<evidence type="ECO:0000269" key="4">
    <source>
    </source>
</evidence>
<evidence type="ECO:0000269" key="5">
    <source>
    </source>
</evidence>
<evidence type="ECO:0000269" key="6">
    <source>
    </source>
</evidence>
<evidence type="ECO:0000305" key="7"/>
<evidence type="ECO:0007744" key="8">
    <source>
    </source>
</evidence>